<protein>
    <recommendedName>
        <fullName evidence="1">Beta-ketoacyl-[acyl-carrier-protein] synthase III</fullName>
        <shortName evidence="1">Beta-ketoacyl-ACP synthase III</shortName>
        <shortName evidence="1">KAS III</shortName>
        <ecNumber evidence="1">2.3.1.180</ecNumber>
    </recommendedName>
    <alternativeName>
        <fullName evidence="1">3-oxoacyl-[acyl-carrier-protein] synthase 3</fullName>
    </alternativeName>
    <alternativeName>
        <fullName evidence="1">3-oxoacyl-[acyl-carrier-protein] synthase III</fullName>
    </alternativeName>
</protein>
<organism>
    <name type="scientific">Enterococcus faecalis (strain ATCC 700802 / V583)</name>
    <dbReference type="NCBI Taxonomy" id="226185"/>
    <lineage>
        <taxon>Bacteria</taxon>
        <taxon>Bacillati</taxon>
        <taxon>Bacillota</taxon>
        <taxon>Bacilli</taxon>
        <taxon>Lactobacillales</taxon>
        <taxon>Enterococcaceae</taxon>
        <taxon>Enterococcus</taxon>
    </lineage>
</organism>
<evidence type="ECO:0000255" key="1">
    <source>
        <dbReference type="HAMAP-Rule" id="MF_01815"/>
    </source>
</evidence>
<evidence type="ECO:0007829" key="2">
    <source>
        <dbReference type="PDB" id="3IL5"/>
    </source>
</evidence>
<evidence type="ECO:0007829" key="3">
    <source>
        <dbReference type="PDB" id="3IL6"/>
    </source>
</evidence>
<sequence length="321" mass="35182">MKNYARISCTSRYVPENCVTNHQLSEMMDTSDEWIHSRTGISERRIVTQENTSDLCHQVAKQLLEKSGKQASEIDFILVATVTPDFNMPSVACQVQGAIGATEAFAFDISAACSGFVYALSMAEKLVLSGRYQTGLVIGGETFSKMLDWTDRSTAVLFGDGAAGVLIEAAETPHFLNEKLQADGQRWAALTSGYTINESPFYQGHKQASKTLQMEGRSIFDFAIKDVSQNILSLVTDETVDYLLLHQANVRIIDKIARKTKISREKFLTNMDKYGNTSAASIPILLDEAVENGTLILGSQQRVVLTGFGGGLTWGSLLLTL</sequence>
<reference key="1">
    <citation type="journal article" date="2003" name="Science">
        <title>Role of mobile DNA in the evolution of vancomycin-resistant Enterococcus faecalis.</title>
        <authorList>
            <person name="Paulsen I.T."/>
            <person name="Banerjei L."/>
            <person name="Myers G.S.A."/>
            <person name="Nelson K.E."/>
            <person name="Seshadri R."/>
            <person name="Read T.D."/>
            <person name="Fouts D.E."/>
            <person name="Eisen J.A."/>
            <person name="Gill S.R."/>
            <person name="Heidelberg J.F."/>
            <person name="Tettelin H."/>
            <person name="Dodson R.J."/>
            <person name="Umayam L.A."/>
            <person name="Brinkac L.M."/>
            <person name="Beanan M.J."/>
            <person name="Daugherty S.C."/>
            <person name="DeBoy R.T."/>
            <person name="Durkin S.A."/>
            <person name="Kolonay J.F."/>
            <person name="Madupu R."/>
            <person name="Nelson W.C."/>
            <person name="Vamathevan J.J."/>
            <person name="Tran B."/>
            <person name="Upton J."/>
            <person name="Hansen T."/>
            <person name="Shetty J."/>
            <person name="Khouri H.M."/>
            <person name="Utterback T.R."/>
            <person name="Radune D."/>
            <person name="Ketchum K.A."/>
            <person name="Dougherty B.A."/>
            <person name="Fraser C.M."/>
        </authorList>
    </citation>
    <scope>NUCLEOTIDE SEQUENCE [LARGE SCALE GENOMIC DNA]</scope>
    <source>
        <strain>ATCC 700802 / V583</strain>
    </source>
</reference>
<gene>
    <name evidence="1" type="primary">fabH</name>
    <name type="ordered locus">EF_2885</name>
</gene>
<proteinExistence type="evidence at protein level"/>
<name>FABH_ENTFA</name>
<keyword id="KW-0002">3D-structure</keyword>
<keyword id="KW-0012">Acyltransferase</keyword>
<keyword id="KW-0963">Cytoplasm</keyword>
<keyword id="KW-0275">Fatty acid biosynthesis</keyword>
<keyword id="KW-0276">Fatty acid metabolism</keyword>
<keyword id="KW-0444">Lipid biosynthesis</keyword>
<keyword id="KW-0443">Lipid metabolism</keyword>
<keyword id="KW-0511">Multifunctional enzyme</keyword>
<keyword id="KW-1185">Reference proteome</keyword>
<keyword id="KW-0808">Transferase</keyword>
<accession>Q820T1</accession>
<dbReference type="EC" id="2.3.1.180" evidence="1"/>
<dbReference type="EMBL" id="AE016830">
    <property type="protein sequence ID" value="AAO82575.1"/>
    <property type="molecule type" value="Genomic_DNA"/>
</dbReference>
<dbReference type="RefSeq" id="NP_816505.1">
    <property type="nucleotide sequence ID" value="NC_004668.1"/>
</dbReference>
<dbReference type="RefSeq" id="WP_002365153.1">
    <property type="nucleotide sequence ID" value="NZ_KE136528.1"/>
</dbReference>
<dbReference type="PDB" id="3IL4">
    <property type="method" value="X-ray"/>
    <property type="resolution" value="3.00 A"/>
    <property type="chains" value="A/B/C/D=2-321"/>
</dbReference>
<dbReference type="PDB" id="3IL5">
    <property type="method" value="X-ray"/>
    <property type="resolution" value="2.60 A"/>
    <property type="chains" value="A/B/C/D=1-321"/>
</dbReference>
<dbReference type="PDB" id="3IL6">
    <property type="method" value="X-ray"/>
    <property type="resolution" value="2.50 A"/>
    <property type="chains" value="A=1-321"/>
</dbReference>
<dbReference type="PDBsum" id="3IL4"/>
<dbReference type="PDBsum" id="3IL5"/>
<dbReference type="PDBsum" id="3IL6"/>
<dbReference type="SMR" id="Q820T1"/>
<dbReference type="STRING" id="226185.EF_2885"/>
<dbReference type="BindingDB" id="Q820T1"/>
<dbReference type="ChEMBL" id="CHEMBL5070"/>
<dbReference type="DrugBank" id="DB07429">
    <property type="generic name" value="2-({[4-bromo-3-(diethylsulfamoyl)phenyl]carbonyl}amino)benzoic acid"/>
</dbReference>
<dbReference type="EnsemblBacteria" id="AAO82575">
    <property type="protein sequence ID" value="AAO82575"/>
    <property type="gene ID" value="EF_2885"/>
</dbReference>
<dbReference type="KEGG" id="efa:EF2885"/>
<dbReference type="PATRIC" id="fig|226185.45.peg.688"/>
<dbReference type="eggNOG" id="COG0332">
    <property type="taxonomic scope" value="Bacteria"/>
</dbReference>
<dbReference type="HOGENOM" id="CLU_039592_4_1_9"/>
<dbReference type="BRENDA" id="2.3.1.180">
    <property type="organism ID" value="2095"/>
</dbReference>
<dbReference type="UniPathway" id="UPA00094"/>
<dbReference type="EvolutionaryTrace" id="Q820T1"/>
<dbReference type="PRO" id="PR:Q820T1"/>
<dbReference type="Proteomes" id="UP000001415">
    <property type="component" value="Chromosome"/>
</dbReference>
<dbReference type="GO" id="GO:0005737">
    <property type="term" value="C:cytoplasm"/>
    <property type="evidence" value="ECO:0007669"/>
    <property type="project" value="UniProtKB-SubCell"/>
</dbReference>
<dbReference type="GO" id="GO:0004315">
    <property type="term" value="F:3-oxoacyl-[acyl-carrier-protein] synthase activity"/>
    <property type="evidence" value="ECO:0007669"/>
    <property type="project" value="InterPro"/>
</dbReference>
<dbReference type="GO" id="GO:0033818">
    <property type="term" value="F:beta-ketoacyl-acyl-carrier-protein synthase III activity"/>
    <property type="evidence" value="ECO:0007669"/>
    <property type="project" value="UniProtKB-UniRule"/>
</dbReference>
<dbReference type="GO" id="GO:0006633">
    <property type="term" value="P:fatty acid biosynthetic process"/>
    <property type="evidence" value="ECO:0007669"/>
    <property type="project" value="UniProtKB-UniRule"/>
</dbReference>
<dbReference type="CDD" id="cd00830">
    <property type="entry name" value="KAS_III"/>
    <property type="match status" value="1"/>
</dbReference>
<dbReference type="Gene3D" id="3.40.47.10">
    <property type="match status" value="2"/>
</dbReference>
<dbReference type="HAMAP" id="MF_01815">
    <property type="entry name" value="FabH"/>
    <property type="match status" value="1"/>
</dbReference>
<dbReference type="InterPro" id="IPR013747">
    <property type="entry name" value="ACP_syn_III_C"/>
</dbReference>
<dbReference type="InterPro" id="IPR013751">
    <property type="entry name" value="ACP_syn_III_N"/>
</dbReference>
<dbReference type="InterPro" id="IPR004655">
    <property type="entry name" value="FabH"/>
</dbReference>
<dbReference type="InterPro" id="IPR016039">
    <property type="entry name" value="Thiolase-like"/>
</dbReference>
<dbReference type="NCBIfam" id="TIGR00747">
    <property type="entry name" value="fabH"/>
    <property type="match status" value="1"/>
</dbReference>
<dbReference type="NCBIfam" id="NF006829">
    <property type="entry name" value="PRK09352.1"/>
    <property type="match status" value="1"/>
</dbReference>
<dbReference type="PANTHER" id="PTHR43091">
    <property type="entry name" value="3-OXOACYL-[ACYL-CARRIER-PROTEIN] SYNTHASE"/>
    <property type="match status" value="1"/>
</dbReference>
<dbReference type="PANTHER" id="PTHR43091:SF1">
    <property type="entry name" value="BETA-KETOACYL-[ACYL-CARRIER-PROTEIN] SYNTHASE III, CHLOROPLASTIC"/>
    <property type="match status" value="1"/>
</dbReference>
<dbReference type="Pfam" id="PF08545">
    <property type="entry name" value="ACP_syn_III"/>
    <property type="match status" value="1"/>
</dbReference>
<dbReference type="Pfam" id="PF08541">
    <property type="entry name" value="ACP_syn_III_C"/>
    <property type="match status" value="1"/>
</dbReference>
<dbReference type="SUPFAM" id="SSF53901">
    <property type="entry name" value="Thiolase-like"/>
    <property type="match status" value="1"/>
</dbReference>
<comment type="function">
    <text evidence="1">Catalyzes the condensation reaction of fatty acid synthesis by the addition to an acyl acceptor of two carbons from malonyl-ACP. Catalyzes the first condensation reaction which initiates fatty acid synthesis and may therefore play a role in governing the total rate of fatty acid production. Possesses both acetoacetyl-ACP synthase and acetyl transacylase activities. Its substrate specificity determines the biosynthesis of branched-chain and/or straight-chain of fatty acids.</text>
</comment>
<comment type="catalytic activity">
    <reaction evidence="1">
        <text>malonyl-[ACP] + acetyl-CoA + H(+) = 3-oxobutanoyl-[ACP] + CO2 + CoA</text>
        <dbReference type="Rhea" id="RHEA:12080"/>
        <dbReference type="Rhea" id="RHEA-COMP:9623"/>
        <dbReference type="Rhea" id="RHEA-COMP:9625"/>
        <dbReference type="ChEBI" id="CHEBI:15378"/>
        <dbReference type="ChEBI" id="CHEBI:16526"/>
        <dbReference type="ChEBI" id="CHEBI:57287"/>
        <dbReference type="ChEBI" id="CHEBI:57288"/>
        <dbReference type="ChEBI" id="CHEBI:78449"/>
        <dbReference type="ChEBI" id="CHEBI:78450"/>
        <dbReference type="EC" id="2.3.1.180"/>
    </reaction>
</comment>
<comment type="pathway">
    <text evidence="1">Lipid metabolism; fatty acid biosynthesis.</text>
</comment>
<comment type="subunit">
    <text evidence="1">Homodimer.</text>
</comment>
<comment type="subcellular location">
    <subcellularLocation>
        <location evidence="1">Cytoplasm</location>
    </subcellularLocation>
</comment>
<comment type="domain">
    <text evidence="1">The last Arg residue of the ACP-binding site is essential for the weak association between ACP/AcpP and FabH.</text>
</comment>
<comment type="similarity">
    <text evidence="1">Belongs to the thiolase-like superfamily. FabH family.</text>
</comment>
<feature type="chain" id="PRO_0000110427" description="Beta-ketoacyl-[acyl-carrier-protein] synthase III">
    <location>
        <begin position="1"/>
        <end position="321"/>
    </location>
</feature>
<feature type="region of interest" description="ACP-binding" evidence="1">
    <location>
        <begin position="247"/>
        <end position="251"/>
    </location>
</feature>
<feature type="active site" evidence="1">
    <location>
        <position position="113"/>
    </location>
</feature>
<feature type="active site" evidence="1">
    <location>
        <position position="246"/>
    </location>
</feature>
<feature type="active site" evidence="1">
    <location>
        <position position="276"/>
    </location>
</feature>
<feature type="strand" evidence="3">
    <location>
        <begin position="4"/>
        <end position="13"/>
    </location>
</feature>
<feature type="strand" evidence="3">
    <location>
        <begin position="18"/>
        <end position="20"/>
    </location>
</feature>
<feature type="helix" evidence="3">
    <location>
        <begin position="21"/>
        <end position="27"/>
    </location>
</feature>
<feature type="helix" evidence="3">
    <location>
        <begin position="32"/>
        <end position="39"/>
    </location>
</feature>
<feature type="strand" evidence="3">
    <location>
        <begin position="42"/>
        <end position="45"/>
    </location>
</feature>
<feature type="helix" evidence="3">
    <location>
        <begin position="52"/>
        <end position="67"/>
    </location>
</feature>
<feature type="helix" evidence="3">
    <location>
        <begin position="71"/>
        <end position="73"/>
    </location>
</feature>
<feature type="strand" evidence="3">
    <location>
        <begin position="76"/>
        <end position="80"/>
    </location>
</feature>
<feature type="strand" evidence="3">
    <location>
        <begin position="87"/>
        <end position="89"/>
    </location>
</feature>
<feature type="helix" evidence="3">
    <location>
        <begin position="91"/>
        <end position="98"/>
    </location>
</feature>
<feature type="strand" evidence="3">
    <location>
        <begin position="105"/>
        <end position="109"/>
    </location>
</feature>
<feature type="helix" evidence="3">
    <location>
        <begin position="112"/>
        <end position="114"/>
    </location>
</feature>
<feature type="helix" evidence="3">
    <location>
        <begin position="115"/>
        <end position="128"/>
    </location>
</feature>
<feature type="strand" evidence="3">
    <location>
        <begin position="135"/>
        <end position="141"/>
    </location>
</feature>
<feature type="helix" evidence="3">
    <location>
        <begin position="143"/>
        <end position="146"/>
    </location>
</feature>
<feature type="turn" evidence="3">
    <location>
        <begin position="152"/>
        <end position="154"/>
    </location>
</feature>
<feature type="helix" evidence="3">
    <location>
        <begin position="155"/>
        <end position="157"/>
    </location>
</feature>
<feature type="strand" evidence="3">
    <location>
        <begin position="161"/>
        <end position="172"/>
    </location>
</feature>
<feature type="strand" evidence="3">
    <location>
        <begin position="175"/>
        <end position="182"/>
    </location>
</feature>
<feature type="helix" evidence="3">
    <location>
        <begin position="184"/>
        <end position="189"/>
    </location>
</feature>
<feature type="strand" evidence="2">
    <location>
        <begin position="190"/>
        <end position="192"/>
    </location>
</feature>
<feature type="helix" evidence="3">
    <location>
        <begin position="216"/>
        <end position="232"/>
    </location>
</feature>
<feature type="helix" evidence="3">
    <location>
        <begin position="237"/>
        <end position="239"/>
    </location>
</feature>
<feature type="strand" evidence="3">
    <location>
        <begin position="241"/>
        <end position="245"/>
    </location>
</feature>
<feature type="helix" evidence="3">
    <location>
        <begin position="250"/>
        <end position="260"/>
    </location>
</feature>
<feature type="helix" evidence="3">
    <location>
        <begin position="264"/>
        <end position="266"/>
    </location>
</feature>
<feature type="helix" evidence="3">
    <location>
        <begin position="271"/>
        <end position="273"/>
    </location>
</feature>
<feature type="helix" evidence="3">
    <location>
        <begin position="278"/>
        <end position="280"/>
    </location>
</feature>
<feature type="helix" evidence="3">
    <location>
        <begin position="281"/>
        <end position="291"/>
    </location>
</feature>
<feature type="strand" evidence="3">
    <location>
        <begin position="302"/>
        <end position="309"/>
    </location>
</feature>
<feature type="turn" evidence="3">
    <location>
        <begin position="310"/>
        <end position="312"/>
    </location>
</feature>
<feature type="strand" evidence="3">
    <location>
        <begin position="313"/>
        <end position="320"/>
    </location>
</feature>